<protein>
    <recommendedName>
        <fullName>Optineurin</fullName>
    </recommendedName>
    <alternativeName>
        <fullName>Ag9-C5</fullName>
    </alternativeName>
    <alternativeName>
        <fullName>FIP-2</fullName>
    </alternativeName>
</protein>
<organism>
    <name type="scientific">Gallus gallus</name>
    <name type="common">Chicken</name>
    <dbReference type="NCBI Taxonomy" id="9031"/>
    <lineage>
        <taxon>Eukaryota</taxon>
        <taxon>Metazoa</taxon>
        <taxon>Chordata</taxon>
        <taxon>Craniata</taxon>
        <taxon>Vertebrata</taxon>
        <taxon>Euteleostomi</taxon>
        <taxon>Archelosauria</taxon>
        <taxon>Archosauria</taxon>
        <taxon>Dinosauria</taxon>
        <taxon>Saurischia</taxon>
        <taxon>Theropoda</taxon>
        <taxon>Coelurosauria</taxon>
        <taxon>Aves</taxon>
        <taxon>Neognathae</taxon>
        <taxon>Galloanserae</taxon>
        <taxon>Galliformes</taxon>
        <taxon>Phasianidae</taxon>
        <taxon>Phasianinae</taxon>
        <taxon>Gallus</taxon>
    </lineage>
</organism>
<gene>
    <name type="primary">OPTN</name>
</gene>
<dbReference type="EMBL" id="AF380358">
    <property type="protein sequence ID" value="AAK69306.1"/>
    <property type="molecule type" value="mRNA"/>
</dbReference>
<dbReference type="EMBL" id="AF389351">
    <property type="protein sequence ID" value="AAM73640.1"/>
    <property type="molecule type" value="mRNA"/>
</dbReference>
<dbReference type="RefSeq" id="NP_989567.1">
    <property type="nucleotide sequence ID" value="NM_204236.1"/>
</dbReference>
<dbReference type="RefSeq" id="XP_046762287.1">
    <property type="nucleotide sequence ID" value="XM_046906331.1"/>
</dbReference>
<dbReference type="RefSeq" id="XP_046762288.1">
    <property type="nucleotide sequence ID" value="XM_046906332.1"/>
</dbReference>
<dbReference type="RefSeq" id="XP_046762292.1">
    <property type="nucleotide sequence ID" value="XM_046906336.1"/>
</dbReference>
<dbReference type="SMR" id="Q90Z16"/>
<dbReference type="FunCoup" id="Q90Z16">
    <property type="interactions" value="762"/>
</dbReference>
<dbReference type="STRING" id="9031.ENSGALP00000022287"/>
<dbReference type="PaxDb" id="9031-ENSGALP00000022287"/>
<dbReference type="GeneID" id="374079"/>
<dbReference type="KEGG" id="gga:374079"/>
<dbReference type="CTD" id="10133"/>
<dbReference type="VEuPathDB" id="HostDB:geneid_374079"/>
<dbReference type="eggNOG" id="ENOG502QTG2">
    <property type="taxonomic scope" value="Eukaryota"/>
</dbReference>
<dbReference type="HOGENOM" id="CLU_034097_1_0_1"/>
<dbReference type="InParanoid" id="Q90Z16"/>
<dbReference type="OrthoDB" id="6343844at2759"/>
<dbReference type="PhylomeDB" id="Q90Z16"/>
<dbReference type="PRO" id="PR:Q90Z16"/>
<dbReference type="Proteomes" id="UP000000539">
    <property type="component" value="Unassembled WGS sequence"/>
</dbReference>
<dbReference type="GO" id="GO:0005776">
    <property type="term" value="C:autophagosome"/>
    <property type="evidence" value="ECO:0007669"/>
    <property type="project" value="UniProtKB-SubCell"/>
</dbReference>
<dbReference type="GO" id="GO:0005737">
    <property type="term" value="C:cytoplasm"/>
    <property type="evidence" value="ECO:0000318"/>
    <property type="project" value="GO_Central"/>
</dbReference>
<dbReference type="GO" id="GO:0005794">
    <property type="term" value="C:Golgi apparatus"/>
    <property type="evidence" value="ECO:0000250"/>
    <property type="project" value="UniProtKB"/>
</dbReference>
<dbReference type="GO" id="GO:0005634">
    <property type="term" value="C:nucleus"/>
    <property type="evidence" value="ECO:0000318"/>
    <property type="project" value="GO_Central"/>
</dbReference>
<dbReference type="GO" id="GO:0048471">
    <property type="term" value="C:perinuclear region of cytoplasm"/>
    <property type="evidence" value="ECO:0007669"/>
    <property type="project" value="UniProtKB-SubCell"/>
</dbReference>
<dbReference type="GO" id="GO:0055037">
    <property type="term" value="C:recycling endosome"/>
    <property type="evidence" value="ECO:0007669"/>
    <property type="project" value="UniProtKB-SubCell"/>
</dbReference>
<dbReference type="GO" id="GO:0070530">
    <property type="term" value="F:K63-linked polyubiquitin modification-dependent protein binding"/>
    <property type="evidence" value="ECO:0000318"/>
    <property type="project" value="GO_Central"/>
</dbReference>
<dbReference type="GO" id="GO:0008270">
    <property type="term" value="F:zinc ion binding"/>
    <property type="evidence" value="ECO:0007669"/>
    <property type="project" value="UniProtKB-KW"/>
</dbReference>
<dbReference type="GO" id="GO:0006914">
    <property type="term" value="P:autophagy"/>
    <property type="evidence" value="ECO:0007669"/>
    <property type="project" value="UniProtKB-KW"/>
</dbReference>
<dbReference type="GO" id="GO:0090161">
    <property type="term" value="P:Golgi ribbon formation"/>
    <property type="evidence" value="ECO:0000318"/>
    <property type="project" value="GO_Central"/>
</dbReference>
<dbReference type="GO" id="GO:0034067">
    <property type="term" value="P:protein localization to Golgi apparatus"/>
    <property type="evidence" value="ECO:0000318"/>
    <property type="project" value="GO_Central"/>
</dbReference>
<dbReference type="GO" id="GO:0043122">
    <property type="term" value="P:regulation of canonical NF-kappaB signal transduction"/>
    <property type="evidence" value="ECO:0000318"/>
    <property type="project" value="GO_Central"/>
</dbReference>
<dbReference type="CDD" id="cd09803">
    <property type="entry name" value="UBAN"/>
    <property type="match status" value="1"/>
</dbReference>
<dbReference type="FunFam" id="1.20.5.390:FF:000004">
    <property type="entry name" value="Optineurin"/>
    <property type="match status" value="1"/>
</dbReference>
<dbReference type="FunFam" id="1.20.5.990:FF:000002">
    <property type="entry name" value="Optineurin"/>
    <property type="match status" value="1"/>
</dbReference>
<dbReference type="Gene3D" id="1.20.5.390">
    <property type="entry name" value="L1 transposable element, trimerization domain"/>
    <property type="match status" value="2"/>
</dbReference>
<dbReference type="Gene3D" id="1.20.5.990">
    <property type="entry name" value="Nemo cc2-lz domain - 1d5 darpin complex"/>
    <property type="match status" value="1"/>
</dbReference>
<dbReference type="InterPro" id="IPR032419">
    <property type="entry name" value="CC2-LZ_dom"/>
</dbReference>
<dbReference type="InterPro" id="IPR021063">
    <property type="entry name" value="NEMO_N"/>
</dbReference>
<dbReference type="InterPro" id="IPR034735">
    <property type="entry name" value="NEMO_ZF"/>
</dbReference>
<dbReference type="InterPro" id="IPR051301">
    <property type="entry name" value="Optineurin/NFkB_EssMod"/>
</dbReference>
<dbReference type="PANTHER" id="PTHR31553">
    <property type="entry name" value="NF-KAPPA-B ESSENTIAL MODULATOR"/>
    <property type="match status" value="1"/>
</dbReference>
<dbReference type="PANTHER" id="PTHR31553:SF2">
    <property type="entry name" value="OPTINEURIN"/>
    <property type="match status" value="1"/>
</dbReference>
<dbReference type="Pfam" id="PF16516">
    <property type="entry name" value="CC2-LZ"/>
    <property type="match status" value="1"/>
</dbReference>
<dbReference type="Pfam" id="PF11577">
    <property type="entry name" value="NEMO"/>
    <property type="match status" value="1"/>
</dbReference>
<dbReference type="Pfam" id="PF18414">
    <property type="entry name" value="zf_C2H2_10"/>
    <property type="match status" value="1"/>
</dbReference>
<dbReference type="PROSITE" id="PS51801">
    <property type="entry name" value="ZF_CCHC_NOA"/>
    <property type="match status" value="1"/>
</dbReference>
<evidence type="ECO:0000250" key="1"/>
<evidence type="ECO:0000255" key="2"/>
<evidence type="ECO:0000255" key="3">
    <source>
        <dbReference type="PROSITE-ProRule" id="PRU01142"/>
    </source>
</evidence>
<evidence type="ECO:0000256" key="4">
    <source>
        <dbReference type="SAM" id="MobiDB-lite"/>
    </source>
</evidence>
<evidence type="ECO:0000269" key="5">
    <source>
    </source>
</evidence>
<evidence type="ECO:0000269" key="6">
    <source>
    </source>
</evidence>
<proteinExistence type="evidence at protein level"/>
<accession>Q90Z16</accession>
<reference key="1">
    <citation type="journal article" date="2002" name="Exp. Cell Res.">
        <title>Differential localization of chicken FIP2 homologue, Ag-9C5, in secretory epithelial cells.</title>
        <authorList>
            <person name="Li B."/>
            <person name="Gallin W.J."/>
        </authorList>
    </citation>
    <scope>NUCLEOTIDE SEQUENCE [MRNA]</scope>
    <scope>FUNCTION</scope>
    <scope>SUBCELLULAR LOCATION</scope>
    <scope>TISSUE SPECIFICITY</scope>
</reference>
<reference key="2">
    <citation type="journal article" date="2002" name="Exp. Cell Res.">
        <title>FIP-2, an IkappaB-kinase-gamma-related protein, is associated with the Golgi apparatus and translocates to the marginal band during chicken erythroblast differentiation.</title>
        <authorList>
            <person name="Stroissnigg H."/>
            <person name="Repitz M."/>
            <person name="Miloloza A."/>
            <person name="Linhartova I."/>
            <person name="Beug H."/>
            <person name="Wiche G."/>
            <person name="Propst F."/>
        </authorList>
    </citation>
    <scope>NUCLEOTIDE SEQUENCE [MRNA]</scope>
    <scope>FUNCTION</scope>
    <scope>SUBCELLULAR LOCATION</scope>
    <scope>TISSUE SPECIFICITY</scope>
</reference>
<name>OPTN_CHICK</name>
<keyword id="KW-0072">Autophagy</keyword>
<keyword id="KW-0175">Coiled coil</keyword>
<keyword id="KW-0963">Cytoplasm</keyword>
<keyword id="KW-0968">Cytoplasmic vesicle</keyword>
<keyword id="KW-0967">Endosome</keyword>
<keyword id="KW-0333">Golgi apparatus</keyword>
<keyword id="KW-0479">Metal-binding</keyword>
<keyword id="KW-1185">Reference proteome</keyword>
<keyword id="KW-0862">Zinc</keyword>
<keyword id="KW-0863">Zinc-finger</keyword>
<comment type="function">
    <text evidence="5 6">Probably part of the TNF-alpha signaling pathway that can shift the equilibrium toward induction of cell death. May act by regulating membrane trafficking and cellular morphogenesis. May act as autophagy receptor that interacts directly with both the cargo to become degraded and an autophagy modifier of the MAP1 LC3 family.</text>
</comment>
<comment type="subunit">
    <text evidence="1">Binds to linear ubiquitin chains. Interacts with LC3 family members (By similarity).</text>
</comment>
<comment type="subcellular location">
    <subcellularLocation>
        <location evidence="5 6">Cytoplasm</location>
    </subcellularLocation>
    <subcellularLocation>
        <location evidence="1">Cytoplasm</location>
        <location evidence="1">Perinuclear region</location>
    </subcellularLocation>
    <subcellularLocation>
        <location evidence="6">Golgi apparatus</location>
    </subcellularLocation>
    <subcellularLocation>
        <location evidence="1">Golgi apparatus</location>
        <location evidence="1">trans-Golgi network</location>
    </subcellularLocation>
    <subcellularLocation>
        <location evidence="1">Cytoplasmic vesicle</location>
    </subcellularLocation>
    <subcellularLocation>
        <location evidence="1">Recycling endosome</location>
    </subcellularLocation>
    <subcellularLocation>
        <location evidence="1">Cytoplasmic vesicle</location>
        <location evidence="1">Autophagosome</location>
    </subcellularLocation>
</comment>
<comment type="tissue specificity">
    <text evidence="5 6">Expressed in erythrocytes, skeletal muscle, heart, spleen and brain. Weakly expressed in lung and liver (at protein level).</text>
</comment>
<comment type="domain">
    <text evidence="1">The LIR (LC3-interacting region) motif mediates the interaction with ATG8 family proteins.</text>
</comment>
<comment type="domain">
    <text evidence="1">Ubiquitin-binding motif (UBAN) is essential for its inhibitory function, subcellular localization and interaction with TBK1.</text>
</comment>
<feature type="chain" id="PRO_0000058065" description="Optineurin">
    <location>
        <begin position="1"/>
        <end position="556"/>
    </location>
</feature>
<feature type="zinc finger region" description="CCHC NOA-type" evidence="3">
    <location>
        <begin position="526"/>
        <end position="556"/>
    </location>
</feature>
<feature type="region of interest" description="Disordered" evidence="4">
    <location>
        <begin position="1"/>
        <end position="33"/>
    </location>
</feature>
<feature type="region of interest" description="Disordered" evidence="4">
    <location>
        <begin position="245"/>
        <end position="274"/>
    </location>
</feature>
<feature type="region of interest" description="Disordered" evidence="4">
    <location>
        <begin position="496"/>
        <end position="524"/>
    </location>
</feature>
<feature type="coiled-coil region" evidence="2">
    <location>
        <begin position="38"/>
        <end position="164"/>
    </location>
</feature>
<feature type="coiled-coil region" evidence="2">
    <location>
        <begin position="219"/>
        <end position="487"/>
    </location>
</feature>
<feature type="short sequence motif" description="LIR">
    <location>
        <begin position="168"/>
        <end position="173"/>
    </location>
</feature>
<feature type="short sequence motif" description="UBAN">
    <location>
        <begin position="453"/>
        <end position="458"/>
    </location>
</feature>
<feature type="compositionally biased region" description="Basic and acidic residues" evidence="4">
    <location>
        <begin position="11"/>
        <end position="22"/>
    </location>
</feature>
<feature type="compositionally biased region" description="Polar residues" evidence="4">
    <location>
        <begin position="253"/>
        <end position="265"/>
    </location>
</feature>
<feature type="binding site" evidence="3">
    <location>
        <position position="534"/>
    </location>
    <ligand>
        <name>Zn(2+)</name>
        <dbReference type="ChEBI" id="CHEBI:29105"/>
    </ligand>
</feature>
<feature type="binding site" evidence="3">
    <location>
        <position position="537"/>
    </location>
    <ligand>
        <name>Zn(2+)</name>
        <dbReference type="ChEBI" id="CHEBI:29105"/>
    </ligand>
</feature>
<feature type="binding site" evidence="3">
    <location>
        <position position="550"/>
    </location>
    <ligand>
        <name>Zn(2+)</name>
        <dbReference type="ChEBI" id="CHEBI:29105"/>
    </ligand>
</feature>
<feature type="binding site" evidence="3">
    <location>
        <position position="554"/>
    </location>
    <ligand>
        <name>Zn(2+)</name>
        <dbReference type="ChEBI" id="CHEBI:29105"/>
    </ligand>
</feature>
<sequence length="556" mass="64087">MSSKPQIRPAENGEHCRSKMENGMDSMAPPTLSTYTPEEMVQQMKELITENNELKEAMKLHNQAMKDRYEELSIWREKQKEEREFYETKFKEAKQCLLAKCVENEQLQQQLQSLKEREEGAEMEGCATPEKEARQLKSKVQRLQAEKADLLAIISELQVKLNIASAEDSFVEIGMNEEVNRTARENQDNSSEMASNIAVYIRSKSADESKNLESEELTVSQLLCCLRNETQRREKLEKELQDHKERLSKMENETSNCLESGTQTNQEEESSEAIGSEVESLKKQICALFKELQEAHEKLKEAELIQKKLQEKCQTLEKVNSAAATELEEKQQLIYTIKKLELQVESVQAEVKLEQAKTQDEKTRYSSLQDAYNKLLAELTEAMKTISEMKVKEHDRVDKVVVEELNAKVLLAEQALAAKQLQMDEMKQLIAKQEEDLETMAVLRAQMEVYCSDFHAERAAREKIHEEKEQLAVQLAYLLKEQQNLEDLGRSSLAEMQNRHGARAPDREHSPRLVQRGTGSQEWPEQRNISIYSCPKCEEILPDLDTLQIHVMDCIN</sequence>